<sequence length="422" mass="46237">MHDLKSIRDNPDGFDAGLKRRGLEPKAAAILDLDTRRRAAQTAFQEMQARRNDASKQIGALKKSGGDASALMDEVASLKERMPAAEEEDKALGAEIESILASIPNLPASDVPDGPDEDHNVELRKWGTPKSFAFTALDHDAIGAKLGLMDFDGAAKLSGARFVVLKGQLARLQRAIGQFMLDLQTVEHGYTEMDPPLMVKDGAAFGTGQLPKFGEDLFKTNTGHWLIPTAEVPLTNLVSDEILDEKALPLRMTALTPCFRSEAGAAGKDTRGMIRQHQFHKVEMVSIAHPDASGAEHERMTQCAETVLQRLGLAYRVIVLCTGDMGFSAQKTYDIEVWLPGQQRYREISSCSNCGDFQARRMKARFRPEGEKGTRFVHTLNGSGLAVGRTLIAVMENYQREDGTIEVPEALRPYMGGLEVIG</sequence>
<evidence type="ECO:0000255" key="1">
    <source>
        <dbReference type="HAMAP-Rule" id="MF_00176"/>
    </source>
</evidence>
<evidence type="ECO:0000256" key="2">
    <source>
        <dbReference type="SAM" id="MobiDB-lite"/>
    </source>
</evidence>
<keyword id="KW-0030">Aminoacyl-tRNA synthetase</keyword>
<keyword id="KW-0067">ATP-binding</keyword>
<keyword id="KW-0963">Cytoplasm</keyword>
<keyword id="KW-0436">Ligase</keyword>
<keyword id="KW-0547">Nucleotide-binding</keyword>
<keyword id="KW-0648">Protein biosynthesis</keyword>
<comment type="function">
    <text evidence="1">Catalyzes the attachment of serine to tRNA(Ser). Is also able to aminoacylate tRNA(Sec) with serine, to form the misacylated tRNA L-seryl-tRNA(Sec), which will be further converted into selenocysteinyl-tRNA(Sec).</text>
</comment>
<comment type="catalytic activity">
    <reaction evidence="1">
        <text>tRNA(Ser) + L-serine + ATP = L-seryl-tRNA(Ser) + AMP + diphosphate + H(+)</text>
        <dbReference type="Rhea" id="RHEA:12292"/>
        <dbReference type="Rhea" id="RHEA-COMP:9669"/>
        <dbReference type="Rhea" id="RHEA-COMP:9703"/>
        <dbReference type="ChEBI" id="CHEBI:15378"/>
        <dbReference type="ChEBI" id="CHEBI:30616"/>
        <dbReference type="ChEBI" id="CHEBI:33019"/>
        <dbReference type="ChEBI" id="CHEBI:33384"/>
        <dbReference type="ChEBI" id="CHEBI:78442"/>
        <dbReference type="ChEBI" id="CHEBI:78533"/>
        <dbReference type="ChEBI" id="CHEBI:456215"/>
        <dbReference type="EC" id="6.1.1.11"/>
    </reaction>
</comment>
<comment type="catalytic activity">
    <reaction evidence="1">
        <text>tRNA(Sec) + L-serine + ATP = L-seryl-tRNA(Sec) + AMP + diphosphate + H(+)</text>
        <dbReference type="Rhea" id="RHEA:42580"/>
        <dbReference type="Rhea" id="RHEA-COMP:9742"/>
        <dbReference type="Rhea" id="RHEA-COMP:10128"/>
        <dbReference type="ChEBI" id="CHEBI:15378"/>
        <dbReference type="ChEBI" id="CHEBI:30616"/>
        <dbReference type="ChEBI" id="CHEBI:33019"/>
        <dbReference type="ChEBI" id="CHEBI:33384"/>
        <dbReference type="ChEBI" id="CHEBI:78442"/>
        <dbReference type="ChEBI" id="CHEBI:78533"/>
        <dbReference type="ChEBI" id="CHEBI:456215"/>
        <dbReference type="EC" id="6.1.1.11"/>
    </reaction>
</comment>
<comment type="pathway">
    <text evidence="1">Aminoacyl-tRNA biosynthesis; selenocysteinyl-tRNA(Sec) biosynthesis; L-seryl-tRNA(Sec) from L-serine and tRNA(Sec): step 1/1.</text>
</comment>
<comment type="subunit">
    <text evidence="1">Homodimer. The tRNA molecule binds across the dimer.</text>
</comment>
<comment type="subcellular location">
    <subcellularLocation>
        <location evidence="1">Cytoplasm</location>
    </subcellularLocation>
</comment>
<comment type="domain">
    <text evidence="1">Consists of two distinct domains, a catalytic core and a N-terminal extension that is involved in tRNA binding.</text>
</comment>
<comment type="similarity">
    <text evidence="1">Belongs to the class-II aminoacyl-tRNA synthetase family. Type-1 seryl-tRNA synthetase subfamily.</text>
</comment>
<proteinExistence type="inferred from homology"/>
<accession>Q2W4A0</accession>
<gene>
    <name evidence="1" type="primary">serS</name>
    <name type="ordered locus">amb2521</name>
</gene>
<protein>
    <recommendedName>
        <fullName evidence="1">Serine--tRNA ligase</fullName>
        <ecNumber evidence="1">6.1.1.11</ecNumber>
    </recommendedName>
    <alternativeName>
        <fullName evidence="1">Seryl-tRNA synthetase</fullName>
        <shortName evidence="1">SerRS</shortName>
    </alternativeName>
    <alternativeName>
        <fullName evidence="1">Seryl-tRNA(Ser/Sec) synthetase</fullName>
    </alternativeName>
</protein>
<name>SYS_PARM1</name>
<organism>
    <name type="scientific">Paramagnetospirillum magneticum (strain ATCC 700264 / AMB-1)</name>
    <name type="common">Magnetospirillum magneticum</name>
    <dbReference type="NCBI Taxonomy" id="342108"/>
    <lineage>
        <taxon>Bacteria</taxon>
        <taxon>Pseudomonadati</taxon>
        <taxon>Pseudomonadota</taxon>
        <taxon>Alphaproteobacteria</taxon>
        <taxon>Rhodospirillales</taxon>
        <taxon>Magnetospirillaceae</taxon>
        <taxon>Paramagnetospirillum</taxon>
    </lineage>
</organism>
<dbReference type="EC" id="6.1.1.11" evidence="1"/>
<dbReference type="EMBL" id="AP007255">
    <property type="protein sequence ID" value="BAE51325.1"/>
    <property type="molecule type" value="Genomic_DNA"/>
</dbReference>
<dbReference type="RefSeq" id="WP_011384902.1">
    <property type="nucleotide sequence ID" value="NC_007626.1"/>
</dbReference>
<dbReference type="SMR" id="Q2W4A0"/>
<dbReference type="STRING" id="342108.amb2521"/>
<dbReference type="KEGG" id="mag:amb2521"/>
<dbReference type="HOGENOM" id="CLU_023797_1_1_5"/>
<dbReference type="OrthoDB" id="9804647at2"/>
<dbReference type="UniPathway" id="UPA00906">
    <property type="reaction ID" value="UER00895"/>
</dbReference>
<dbReference type="Proteomes" id="UP000007058">
    <property type="component" value="Chromosome"/>
</dbReference>
<dbReference type="GO" id="GO:0005737">
    <property type="term" value="C:cytoplasm"/>
    <property type="evidence" value="ECO:0007669"/>
    <property type="project" value="UniProtKB-SubCell"/>
</dbReference>
<dbReference type="GO" id="GO:0005524">
    <property type="term" value="F:ATP binding"/>
    <property type="evidence" value="ECO:0007669"/>
    <property type="project" value="UniProtKB-UniRule"/>
</dbReference>
<dbReference type="GO" id="GO:0004828">
    <property type="term" value="F:serine-tRNA ligase activity"/>
    <property type="evidence" value="ECO:0007669"/>
    <property type="project" value="UniProtKB-UniRule"/>
</dbReference>
<dbReference type="GO" id="GO:0016260">
    <property type="term" value="P:selenocysteine biosynthetic process"/>
    <property type="evidence" value="ECO:0007669"/>
    <property type="project" value="UniProtKB-UniRule"/>
</dbReference>
<dbReference type="GO" id="GO:0006434">
    <property type="term" value="P:seryl-tRNA aminoacylation"/>
    <property type="evidence" value="ECO:0007669"/>
    <property type="project" value="UniProtKB-UniRule"/>
</dbReference>
<dbReference type="CDD" id="cd00770">
    <property type="entry name" value="SerRS_core"/>
    <property type="match status" value="1"/>
</dbReference>
<dbReference type="Gene3D" id="3.30.930.10">
    <property type="entry name" value="Bira Bifunctional Protein, Domain 2"/>
    <property type="match status" value="1"/>
</dbReference>
<dbReference type="Gene3D" id="1.10.287.40">
    <property type="entry name" value="Serine-tRNA synthetase, tRNA binding domain"/>
    <property type="match status" value="1"/>
</dbReference>
<dbReference type="HAMAP" id="MF_00176">
    <property type="entry name" value="Ser_tRNA_synth_type1"/>
    <property type="match status" value="1"/>
</dbReference>
<dbReference type="InterPro" id="IPR002314">
    <property type="entry name" value="aa-tRNA-synt_IIb"/>
</dbReference>
<dbReference type="InterPro" id="IPR006195">
    <property type="entry name" value="aa-tRNA-synth_II"/>
</dbReference>
<dbReference type="InterPro" id="IPR045864">
    <property type="entry name" value="aa-tRNA-synth_II/BPL/LPL"/>
</dbReference>
<dbReference type="InterPro" id="IPR002317">
    <property type="entry name" value="Ser-tRNA-ligase_type_1"/>
</dbReference>
<dbReference type="InterPro" id="IPR015866">
    <property type="entry name" value="Ser-tRNA-synth_1_N"/>
</dbReference>
<dbReference type="InterPro" id="IPR042103">
    <property type="entry name" value="SerRS_1_N_sf"/>
</dbReference>
<dbReference type="InterPro" id="IPR033729">
    <property type="entry name" value="SerRS_core"/>
</dbReference>
<dbReference type="InterPro" id="IPR010978">
    <property type="entry name" value="tRNA-bd_arm"/>
</dbReference>
<dbReference type="NCBIfam" id="TIGR00414">
    <property type="entry name" value="serS"/>
    <property type="match status" value="1"/>
</dbReference>
<dbReference type="PANTHER" id="PTHR43697:SF1">
    <property type="entry name" value="SERINE--TRNA LIGASE"/>
    <property type="match status" value="1"/>
</dbReference>
<dbReference type="PANTHER" id="PTHR43697">
    <property type="entry name" value="SERYL-TRNA SYNTHETASE"/>
    <property type="match status" value="1"/>
</dbReference>
<dbReference type="Pfam" id="PF02403">
    <property type="entry name" value="Seryl_tRNA_N"/>
    <property type="match status" value="1"/>
</dbReference>
<dbReference type="Pfam" id="PF00587">
    <property type="entry name" value="tRNA-synt_2b"/>
    <property type="match status" value="1"/>
</dbReference>
<dbReference type="PIRSF" id="PIRSF001529">
    <property type="entry name" value="Ser-tRNA-synth_IIa"/>
    <property type="match status" value="1"/>
</dbReference>
<dbReference type="PRINTS" id="PR00981">
    <property type="entry name" value="TRNASYNTHSER"/>
</dbReference>
<dbReference type="SUPFAM" id="SSF55681">
    <property type="entry name" value="Class II aaRS and biotin synthetases"/>
    <property type="match status" value="1"/>
</dbReference>
<dbReference type="SUPFAM" id="SSF46589">
    <property type="entry name" value="tRNA-binding arm"/>
    <property type="match status" value="1"/>
</dbReference>
<dbReference type="PROSITE" id="PS50862">
    <property type="entry name" value="AA_TRNA_LIGASE_II"/>
    <property type="match status" value="1"/>
</dbReference>
<reference key="1">
    <citation type="journal article" date="2005" name="DNA Res.">
        <title>Complete genome sequence of the facultative anaerobic magnetotactic bacterium Magnetospirillum sp. strain AMB-1.</title>
        <authorList>
            <person name="Matsunaga T."/>
            <person name="Okamura Y."/>
            <person name="Fukuda Y."/>
            <person name="Wahyudi A.T."/>
            <person name="Murase Y."/>
            <person name="Takeyama H."/>
        </authorList>
    </citation>
    <scope>NUCLEOTIDE SEQUENCE [LARGE SCALE GENOMIC DNA]</scope>
    <source>
        <strain>ATCC 700264 / AMB-1</strain>
    </source>
</reference>
<feature type="chain" id="PRO_1000019721" description="Serine--tRNA ligase">
    <location>
        <begin position="1"/>
        <end position="422"/>
    </location>
</feature>
<feature type="region of interest" description="Disordered" evidence="2">
    <location>
        <begin position="1"/>
        <end position="20"/>
    </location>
</feature>
<feature type="binding site" evidence="1">
    <location>
        <begin position="229"/>
        <end position="231"/>
    </location>
    <ligand>
        <name>L-serine</name>
        <dbReference type="ChEBI" id="CHEBI:33384"/>
    </ligand>
</feature>
<feature type="binding site" evidence="1">
    <location>
        <begin position="260"/>
        <end position="262"/>
    </location>
    <ligand>
        <name>ATP</name>
        <dbReference type="ChEBI" id="CHEBI:30616"/>
    </ligand>
</feature>
<feature type="binding site" evidence="1">
    <location>
        <position position="283"/>
    </location>
    <ligand>
        <name>L-serine</name>
        <dbReference type="ChEBI" id="CHEBI:33384"/>
    </ligand>
</feature>
<feature type="binding site" evidence="1">
    <location>
        <begin position="347"/>
        <end position="350"/>
    </location>
    <ligand>
        <name>ATP</name>
        <dbReference type="ChEBI" id="CHEBI:30616"/>
    </ligand>
</feature>
<feature type="binding site" evidence="1">
    <location>
        <position position="383"/>
    </location>
    <ligand>
        <name>L-serine</name>
        <dbReference type="ChEBI" id="CHEBI:33384"/>
    </ligand>
</feature>